<name>CYF_COFAR</name>
<sequence length="319" mass="35209">METRNIFSWIKEQITRSISVSLMIYIITRTAVSNAYPIFAQQGYENPREATGRIVCANCHLANKPVDIEVPQAVLPDTVFEAVVRIPYDKQLKQVLANGKKGGLNVGAVLILPEGFELAPPDRISPEIKEKIGNLSFQSYRPNKKNILVIGPIPGQKYSEITFPILSPDPATKKDVHFLKYPIYVGGNRGRGQIYPDGSKSNNTVYNATGAGIVSKIIRKEKGGYEITITDTDGRQVVDIIPPGPELLVSEGEYIKLDQPLTSNPNVGGFGQGDAEIVLQDPLRVQGLLFFLASVILAQIFLVLKKKQFEKVQLAEMNF</sequence>
<feature type="signal peptide" evidence="2">
    <location>
        <begin position="1"/>
        <end position="35"/>
    </location>
</feature>
<feature type="chain" id="PRO_0000275405" description="Cytochrome f">
    <location>
        <begin position="36"/>
        <end position="319"/>
    </location>
</feature>
<feature type="transmembrane region" description="Helical" evidence="2">
    <location>
        <begin position="285"/>
        <end position="305"/>
    </location>
</feature>
<feature type="binding site" description="axial binding residue" evidence="2">
    <location>
        <position position="36"/>
    </location>
    <ligand>
        <name>heme</name>
        <dbReference type="ChEBI" id="CHEBI:30413"/>
    </ligand>
    <ligandPart>
        <name>Fe</name>
        <dbReference type="ChEBI" id="CHEBI:18248"/>
    </ligandPart>
</feature>
<feature type="binding site" description="covalent" evidence="2">
    <location>
        <position position="56"/>
    </location>
    <ligand>
        <name>heme</name>
        <dbReference type="ChEBI" id="CHEBI:30413"/>
    </ligand>
</feature>
<feature type="binding site" description="covalent" evidence="2">
    <location>
        <position position="59"/>
    </location>
    <ligand>
        <name>heme</name>
        <dbReference type="ChEBI" id="CHEBI:30413"/>
    </ligand>
</feature>
<feature type="binding site" description="axial binding residue" evidence="2">
    <location>
        <position position="60"/>
    </location>
    <ligand>
        <name>heme</name>
        <dbReference type="ChEBI" id="CHEBI:30413"/>
    </ligand>
    <ligandPart>
        <name>Fe</name>
        <dbReference type="ChEBI" id="CHEBI:18248"/>
    </ligandPart>
</feature>
<gene>
    <name evidence="2" type="primary">petA</name>
</gene>
<proteinExistence type="inferred from homology"/>
<keyword id="KW-0150">Chloroplast</keyword>
<keyword id="KW-0249">Electron transport</keyword>
<keyword id="KW-0349">Heme</keyword>
<keyword id="KW-0408">Iron</keyword>
<keyword id="KW-0472">Membrane</keyword>
<keyword id="KW-0479">Metal-binding</keyword>
<keyword id="KW-0602">Photosynthesis</keyword>
<keyword id="KW-0934">Plastid</keyword>
<keyword id="KW-1185">Reference proteome</keyword>
<keyword id="KW-0732">Signal</keyword>
<keyword id="KW-0793">Thylakoid</keyword>
<keyword id="KW-0812">Transmembrane</keyword>
<keyword id="KW-1133">Transmembrane helix</keyword>
<keyword id="KW-0813">Transport</keyword>
<accession>A0A348</accession>
<comment type="function">
    <text evidence="2">Component of the cytochrome b6-f complex, which mediates electron transfer between photosystem II (PSII) and photosystem I (PSI), cyclic electron flow around PSI, and state transitions.</text>
</comment>
<comment type="cofactor">
    <cofactor evidence="2">
        <name>heme</name>
        <dbReference type="ChEBI" id="CHEBI:30413"/>
    </cofactor>
    <text evidence="2">Binds 1 heme group covalently.</text>
</comment>
<comment type="subunit">
    <text evidence="1">The 4 large subunits of the cytochrome b6-f complex are cytochrome b6, subunit IV (17 kDa polypeptide, petD), cytochrome f and the Rieske protein, while the 4 small subunits are PetG, PetL, PetM and PetN. The complex functions as a dimer (By similarity).</text>
</comment>
<comment type="subcellular location">
    <subcellularLocation>
        <location evidence="2">Plastid</location>
        <location evidence="2">Chloroplast thylakoid membrane</location>
        <topology evidence="2">Single-pass membrane protein</topology>
    </subcellularLocation>
</comment>
<comment type="similarity">
    <text evidence="2">Belongs to the cytochrome f family.</text>
</comment>
<reference key="1">
    <citation type="journal article" date="2007" name="Plant Biotechnol. J.">
        <title>The complete nucleotide sequence of the coffee (Coffea arabica L.) chloroplast genome: organization and implications for biotechnology and phylogenetic relationships amongst angiosperms.</title>
        <authorList>
            <person name="Samson N."/>
            <person name="Bausher M.G."/>
            <person name="Lee S.-B."/>
            <person name="Jansen R.K."/>
            <person name="Daniell H."/>
        </authorList>
    </citation>
    <scope>NUCLEOTIDE SEQUENCE [LARGE SCALE GENOMIC DNA]</scope>
</reference>
<geneLocation type="chloroplast"/>
<organism>
    <name type="scientific">Coffea arabica</name>
    <name type="common">Arabian coffee</name>
    <dbReference type="NCBI Taxonomy" id="13443"/>
    <lineage>
        <taxon>Eukaryota</taxon>
        <taxon>Viridiplantae</taxon>
        <taxon>Streptophyta</taxon>
        <taxon>Embryophyta</taxon>
        <taxon>Tracheophyta</taxon>
        <taxon>Spermatophyta</taxon>
        <taxon>Magnoliopsida</taxon>
        <taxon>eudicotyledons</taxon>
        <taxon>Gunneridae</taxon>
        <taxon>Pentapetalae</taxon>
        <taxon>asterids</taxon>
        <taxon>lamiids</taxon>
        <taxon>Gentianales</taxon>
        <taxon>Rubiaceae</taxon>
        <taxon>Ixoroideae</taxon>
        <taxon>Gardenieae complex</taxon>
        <taxon>Bertiereae - Coffeeae clade</taxon>
        <taxon>Coffeeae</taxon>
        <taxon>Coffea</taxon>
    </lineage>
</organism>
<protein>
    <recommendedName>
        <fullName evidence="2">Cytochrome f</fullName>
    </recommendedName>
</protein>
<dbReference type="EMBL" id="EF044213">
    <property type="protein sequence ID" value="ABJ89692.1"/>
    <property type="molecule type" value="Genomic_DNA"/>
</dbReference>
<dbReference type="RefSeq" id="YP_817495.1">
    <property type="nucleotide sequence ID" value="NC_008535.1"/>
</dbReference>
<dbReference type="SMR" id="A0A348"/>
<dbReference type="GeneID" id="4421776"/>
<dbReference type="OrthoDB" id="415867at2759"/>
<dbReference type="Proteomes" id="UP000515148">
    <property type="component" value="Chloroplast Pltd"/>
</dbReference>
<dbReference type="GO" id="GO:0009535">
    <property type="term" value="C:chloroplast thylakoid membrane"/>
    <property type="evidence" value="ECO:0007669"/>
    <property type="project" value="UniProtKB-SubCell"/>
</dbReference>
<dbReference type="GO" id="GO:0009055">
    <property type="term" value="F:electron transfer activity"/>
    <property type="evidence" value="ECO:0007669"/>
    <property type="project" value="UniProtKB-UniRule"/>
</dbReference>
<dbReference type="GO" id="GO:0020037">
    <property type="term" value="F:heme binding"/>
    <property type="evidence" value="ECO:0007669"/>
    <property type="project" value="InterPro"/>
</dbReference>
<dbReference type="GO" id="GO:0005506">
    <property type="term" value="F:iron ion binding"/>
    <property type="evidence" value="ECO:0007669"/>
    <property type="project" value="InterPro"/>
</dbReference>
<dbReference type="GO" id="GO:0015979">
    <property type="term" value="P:photosynthesis"/>
    <property type="evidence" value="ECO:0007669"/>
    <property type="project" value="UniProtKB-UniRule"/>
</dbReference>
<dbReference type="FunFam" id="1.20.5.700:FF:000001">
    <property type="entry name" value="Cytochrome f"/>
    <property type="match status" value="1"/>
</dbReference>
<dbReference type="FunFam" id="2.40.50.100:FF:000007">
    <property type="entry name" value="Cytochrome f"/>
    <property type="match status" value="1"/>
</dbReference>
<dbReference type="FunFam" id="2.60.40.830:FF:000001">
    <property type="entry name" value="Cytochrome f"/>
    <property type="match status" value="1"/>
</dbReference>
<dbReference type="Gene3D" id="2.40.50.100">
    <property type="match status" value="1"/>
</dbReference>
<dbReference type="Gene3D" id="2.60.40.830">
    <property type="entry name" value="Cytochrome f large domain"/>
    <property type="match status" value="1"/>
</dbReference>
<dbReference type="Gene3D" id="1.20.5.700">
    <property type="entry name" value="Single helix bin"/>
    <property type="match status" value="1"/>
</dbReference>
<dbReference type="HAMAP" id="MF_00610">
    <property type="entry name" value="Cytb6_f_cytF"/>
    <property type="match status" value="1"/>
</dbReference>
<dbReference type="InterPro" id="IPR024058">
    <property type="entry name" value="Cyt-f_TM"/>
</dbReference>
<dbReference type="InterPro" id="IPR002325">
    <property type="entry name" value="Cyt_f"/>
</dbReference>
<dbReference type="InterPro" id="IPR024094">
    <property type="entry name" value="Cyt_f_lg_dom"/>
</dbReference>
<dbReference type="InterPro" id="IPR036826">
    <property type="entry name" value="Cyt_f_lg_dom_sf"/>
</dbReference>
<dbReference type="InterPro" id="IPR011054">
    <property type="entry name" value="Rudment_hybrid_motif"/>
</dbReference>
<dbReference type="PANTHER" id="PTHR33288">
    <property type="match status" value="1"/>
</dbReference>
<dbReference type="PANTHER" id="PTHR33288:SF10">
    <property type="entry name" value="CYTOCHROME F"/>
    <property type="match status" value="1"/>
</dbReference>
<dbReference type="Pfam" id="PF01333">
    <property type="entry name" value="Apocytochr_F_C"/>
    <property type="match status" value="1"/>
</dbReference>
<dbReference type="Pfam" id="PF16639">
    <property type="entry name" value="Apocytochr_F_N"/>
    <property type="match status" value="1"/>
</dbReference>
<dbReference type="PRINTS" id="PR00610">
    <property type="entry name" value="CYTOCHROMEF"/>
</dbReference>
<dbReference type="SUPFAM" id="SSF103431">
    <property type="entry name" value="Cytochrome f subunit of the cytochrome b6f complex, transmembrane anchor"/>
    <property type="match status" value="1"/>
</dbReference>
<dbReference type="SUPFAM" id="SSF49441">
    <property type="entry name" value="Cytochrome f, large domain"/>
    <property type="match status" value="1"/>
</dbReference>
<dbReference type="SUPFAM" id="SSF51246">
    <property type="entry name" value="Rudiment single hybrid motif"/>
    <property type="match status" value="1"/>
</dbReference>
<dbReference type="PROSITE" id="PS51010">
    <property type="entry name" value="CYTF"/>
    <property type="match status" value="1"/>
</dbReference>
<evidence type="ECO:0000250" key="1"/>
<evidence type="ECO:0000255" key="2">
    <source>
        <dbReference type="HAMAP-Rule" id="MF_00610"/>
    </source>
</evidence>